<organism>
    <name type="scientific">Streptococcus agalactiae serotype V (strain ATCC BAA-611 / 2603 V/R)</name>
    <dbReference type="NCBI Taxonomy" id="208435"/>
    <lineage>
        <taxon>Bacteria</taxon>
        <taxon>Bacillati</taxon>
        <taxon>Bacillota</taxon>
        <taxon>Bacilli</taxon>
        <taxon>Lactobacillales</taxon>
        <taxon>Streptococcaceae</taxon>
        <taxon>Streptococcus</taxon>
    </lineage>
</organism>
<name>XERS_STRA5</name>
<reference key="1">
    <citation type="journal article" date="2002" name="Proc. Natl. Acad. Sci. U.S.A.">
        <title>Complete genome sequence and comparative genomic analysis of an emerging human pathogen, serotype V Streptococcus agalactiae.</title>
        <authorList>
            <person name="Tettelin H."/>
            <person name="Masignani V."/>
            <person name="Cieslewicz M.J."/>
            <person name="Eisen J.A."/>
            <person name="Peterson S.N."/>
            <person name="Wessels M.R."/>
            <person name="Paulsen I.T."/>
            <person name="Nelson K.E."/>
            <person name="Margarit I."/>
            <person name="Read T.D."/>
            <person name="Madoff L.C."/>
            <person name="Wolf A.M."/>
            <person name="Beanan M.J."/>
            <person name="Brinkac L.M."/>
            <person name="Daugherty S.C."/>
            <person name="DeBoy R.T."/>
            <person name="Durkin A.S."/>
            <person name="Kolonay J.F."/>
            <person name="Madupu R."/>
            <person name="Lewis M.R."/>
            <person name="Radune D."/>
            <person name="Fedorova N.B."/>
            <person name="Scanlan D."/>
            <person name="Khouri H.M."/>
            <person name="Mulligan S."/>
            <person name="Carty H.A."/>
            <person name="Cline R.T."/>
            <person name="Van Aken S.E."/>
            <person name="Gill J."/>
            <person name="Scarselli M."/>
            <person name="Mora M."/>
            <person name="Iacobini E.T."/>
            <person name="Brettoni C."/>
            <person name="Galli G."/>
            <person name="Mariani M."/>
            <person name="Vegni F."/>
            <person name="Maione D."/>
            <person name="Rinaudo D."/>
            <person name="Rappuoli R."/>
            <person name="Telford J.L."/>
            <person name="Kasper D.L."/>
            <person name="Grandi G."/>
            <person name="Fraser C.M."/>
        </authorList>
    </citation>
    <scope>NUCLEOTIDE SEQUENCE [LARGE SCALE GENOMIC DNA]</scope>
    <source>
        <strain>ATCC BAA-611 / 2603 V/R</strain>
    </source>
</reference>
<gene>
    <name evidence="1" type="primary">xerS</name>
    <name type="ordered locus">SAG0978</name>
</gene>
<dbReference type="EMBL" id="AE009948">
    <property type="protein sequence ID" value="AAM99861.1"/>
    <property type="molecule type" value="Genomic_DNA"/>
</dbReference>
<dbReference type="RefSeq" id="NP_687989.1">
    <property type="nucleotide sequence ID" value="NC_004116.1"/>
</dbReference>
<dbReference type="RefSeq" id="WP_000817930.1">
    <property type="nucleotide sequence ID" value="NC_004116.1"/>
</dbReference>
<dbReference type="SMR" id="P67633"/>
<dbReference type="STRING" id="208435.SAG0978"/>
<dbReference type="KEGG" id="sag:SAG0978"/>
<dbReference type="PATRIC" id="fig|208435.3.peg.985"/>
<dbReference type="HOGENOM" id="CLU_027562_9_6_9"/>
<dbReference type="OrthoDB" id="283809at2"/>
<dbReference type="Proteomes" id="UP000000821">
    <property type="component" value="Chromosome"/>
</dbReference>
<dbReference type="GO" id="GO:0005737">
    <property type="term" value="C:cytoplasm"/>
    <property type="evidence" value="ECO:0007669"/>
    <property type="project" value="UniProtKB-SubCell"/>
</dbReference>
<dbReference type="GO" id="GO:0003677">
    <property type="term" value="F:DNA binding"/>
    <property type="evidence" value="ECO:0007669"/>
    <property type="project" value="UniProtKB-KW"/>
</dbReference>
<dbReference type="GO" id="GO:0009037">
    <property type="term" value="F:tyrosine-based site-specific recombinase activity"/>
    <property type="evidence" value="ECO:0007669"/>
    <property type="project" value="UniProtKB-UniRule"/>
</dbReference>
<dbReference type="GO" id="GO:0051301">
    <property type="term" value="P:cell division"/>
    <property type="evidence" value="ECO:0007669"/>
    <property type="project" value="UniProtKB-KW"/>
</dbReference>
<dbReference type="GO" id="GO:0007059">
    <property type="term" value="P:chromosome segregation"/>
    <property type="evidence" value="ECO:0007669"/>
    <property type="project" value="UniProtKB-UniRule"/>
</dbReference>
<dbReference type="GO" id="GO:0006310">
    <property type="term" value="P:DNA recombination"/>
    <property type="evidence" value="ECO:0007669"/>
    <property type="project" value="UniProtKB-UniRule"/>
</dbReference>
<dbReference type="CDD" id="cd00397">
    <property type="entry name" value="DNA_BRE_C"/>
    <property type="match status" value="1"/>
</dbReference>
<dbReference type="Gene3D" id="1.10.150.130">
    <property type="match status" value="1"/>
</dbReference>
<dbReference type="Gene3D" id="1.10.443.10">
    <property type="entry name" value="Intergrase catalytic core"/>
    <property type="match status" value="1"/>
</dbReference>
<dbReference type="HAMAP" id="MF_01816">
    <property type="entry name" value="Recomb_XerS"/>
    <property type="match status" value="1"/>
</dbReference>
<dbReference type="InterPro" id="IPR044068">
    <property type="entry name" value="CB"/>
</dbReference>
<dbReference type="InterPro" id="IPR011010">
    <property type="entry name" value="DNA_brk_join_enz"/>
</dbReference>
<dbReference type="InterPro" id="IPR013762">
    <property type="entry name" value="Integrase-like_cat_sf"/>
</dbReference>
<dbReference type="InterPro" id="IPR002104">
    <property type="entry name" value="Integrase_catalytic"/>
</dbReference>
<dbReference type="InterPro" id="IPR010998">
    <property type="entry name" value="Integrase_recombinase_N"/>
</dbReference>
<dbReference type="InterPro" id="IPR004107">
    <property type="entry name" value="Integrase_SAM-like_N"/>
</dbReference>
<dbReference type="InterPro" id="IPR023670">
    <property type="entry name" value="Recomb_XerS"/>
</dbReference>
<dbReference type="InterPro" id="IPR050090">
    <property type="entry name" value="Tyrosine_recombinase_XerCD"/>
</dbReference>
<dbReference type="NCBIfam" id="NF003462">
    <property type="entry name" value="PRK05084.1"/>
    <property type="match status" value="1"/>
</dbReference>
<dbReference type="PANTHER" id="PTHR30349">
    <property type="entry name" value="PHAGE INTEGRASE-RELATED"/>
    <property type="match status" value="1"/>
</dbReference>
<dbReference type="PANTHER" id="PTHR30349:SF77">
    <property type="entry name" value="TYROSINE RECOMBINASE XERC"/>
    <property type="match status" value="1"/>
</dbReference>
<dbReference type="Pfam" id="PF02899">
    <property type="entry name" value="Phage_int_SAM_1"/>
    <property type="match status" value="1"/>
</dbReference>
<dbReference type="Pfam" id="PF00589">
    <property type="entry name" value="Phage_integrase"/>
    <property type="match status" value="1"/>
</dbReference>
<dbReference type="SUPFAM" id="SSF56349">
    <property type="entry name" value="DNA breaking-rejoining enzymes"/>
    <property type="match status" value="1"/>
</dbReference>
<dbReference type="PROSITE" id="PS51900">
    <property type="entry name" value="CB"/>
    <property type="match status" value="1"/>
</dbReference>
<dbReference type="PROSITE" id="PS51898">
    <property type="entry name" value="TYR_RECOMBINASE"/>
    <property type="match status" value="1"/>
</dbReference>
<comment type="function">
    <text evidence="1">Site-specific tyrosine recombinase, which acts by catalyzing the cutting and rejoining of the recombining DNA molecules. Essential to convert dimers of the bacterial chromosome into monomers to permit their segregation at cell division.</text>
</comment>
<comment type="activity regulation">
    <text evidence="1">FtsK is required for recombination.</text>
</comment>
<comment type="subcellular location">
    <subcellularLocation>
        <location evidence="1">Cytoplasm</location>
    </subcellularLocation>
</comment>
<comment type="similarity">
    <text evidence="1">Belongs to the 'phage' integrase family. XerS subfamily.</text>
</comment>
<feature type="chain" id="PRO_0000095361" description="Tyrosine recombinase XerS">
    <location>
        <begin position="1"/>
        <end position="356"/>
    </location>
</feature>
<feature type="domain" description="Core-binding (CB)" evidence="3">
    <location>
        <begin position="16"/>
        <end position="121"/>
    </location>
</feature>
<feature type="domain" description="Tyr recombinase" evidence="2">
    <location>
        <begin position="169"/>
        <end position="354"/>
    </location>
</feature>
<feature type="active site" evidence="1">
    <location>
        <position position="210"/>
    </location>
</feature>
<feature type="active site" evidence="1">
    <location>
        <position position="234"/>
    </location>
</feature>
<feature type="active site" evidence="1">
    <location>
        <position position="306"/>
    </location>
</feature>
<feature type="active site" evidence="1">
    <location>
        <position position="309"/>
    </location>
</feature>
<feature type="active site" evidence="1">
    <location>
        <position position="332"/>
    </location>
</feature>
<feature type="active site" description="O-(3'-phospho-DNA)-tyrosine intermediate" evidence="1">
    <location>
        <position position="341"/>
    </location>
</feature>
<accession>P67633</accession>
<accession>Q7ZAL3</accession>
<accession>Q7ZAL7</accession>
<proteinExistence type="inferred from homology"/>
<sequence length="356" mass="41362">MKRELLLEKIDELKEIMPWYVLEYYQSKLSVPYSFTTLYEYLKEYRRFLEWLLDSGVANCHHIAEIELSVLENLTKKDMEAFILYLRERPLLNANTRQNGVSQTTINRTLSALSSLFKYLTEEVENADGEPYFYRNVMKKVSTKKKKETLASRAENIKQKLFLGNETIEFLEYIDCEYQNKLSKRALAFFNKNKERDLAIIALLLASGVRLSEAVNLDLKDINLNVMVIDVTRKGGKRDSVNVASFAKPYLANYLDIRKNRYKAENQDIALFLSEYRGVPNRIDASSVEKMVAKYSQDFKVRVTPHKLRHTLATRLYDATKSQVLVSHQLGHASTQVTDLYTHIVNDEQKNALDKL</sequence>
<protein>
    <recommendedName>
        <fullName evidence="1">Tyrosine recombinase XerS</fullName>
    </recommendedName>
</protein>
<evidence type="ECO:0000255" key="1">
    <source>
        <dbReference type="HAMAP-Rule" id="MF_01816"/>
    </source>
</evidence>
<evidence type="ECO:0000255" key="2">
    <source>
        <dbReference type="PROSITE-ProRule" id="PRU01246"/>
    </source>
</evidence>
<evidence type="ECO:0000255" key="3">
    <source>
        <dbReference type="PROSITE-ProRule" id="PRU01248"/>
    </source>
</evidence>
<keyword id="KW-0131">Cell cycle</keyword>
<keyword id="KW-0132">Cell division</keyword>
<keyword id="KW-0159">Chromosome partition</keyword>
<keyword id="KW-0963">Cytoplasm</keyword>
<keyword id="KW-0229">DNA integration</keyword>
<keyword id="KW-0233">DNA recombination</keyword>
<keyword id="KW-0238">DNA-binding</keyword>
<keyword id="KW-1185">Reference proteome</keyword>